<keyword id="KW-0227">DNA damage</keyword>
<keyword id="KW-0233">DNA recombination</keyword>
<keyword id="KW-0234">DNA repair</keyword>
<keyword id="KW-0479">Metal-binding</keyword>
<keyword id="KW-1185">Reference proteome</keyword>
<keyword id="KW-0862">Zinc</keyword>
<keyword id="KW-0863">Zinc-finger</keyword>
<dbReference type="EMBL" id="CP001213">
    <property type="protein sequence ID" value="ACL28504.1"/>
    <property type="molecule type" value="Genomic_DNA"/>
</dbReference>
<dbReference type="RefSeq" id="WP_004218519.1">
    <property type="nucleotide sequence ID" value="NC_011835.1"/>
</dbReference>
<dbReference type="SMR" id="B8DVK3"/>
<dbReference type="STRING" id="442563.BLA_0202"/>
<dbReference type="GeneID" id="29696173"/>
<dbReference type="KEGG" id="bla:BLA_0202"/>
<dbReference type="HOGENOM" id="CLU_060739_1_0_11"/>
<dbReference type="Proteomes" id="UP000002456">
    <property type="component" value="Chromosome"/>
</dbReference>
<dbReference type="GO" id="GO:0003677">
    <property type="term" value="F:DNA binding"/>
    <property type="evidence" value="ECO:0007669"/>
    <property type="project" value="UniProtKB-UniRule"/>
</dbReference>
<dbReference type="GO" id="GO:0008270">
    <property type="term" value="F:zinc ion binding"/>
    <property type="evidence" value="ECO:0007669"/>
    <property type="project" value="UniProtKB-KW"/>
</dbReference>
<dbReference type="GO" id="GO:0006310">
    <property type="term" value="P:DNA recombination"/>
    <property type="evidence" value="ECO:0007669"/>
    <property type="project" value="UniProtKB-UniRule"/>
</dbReference>
<dbReference type="GO" id="GO:0006281">
    <property type="term" value="P:DNA repair"/>
    <property type="evidence" value="ECO:0007669"/>
    <property type="project" value="UniProtKB-UniRule"/>
</dbReference>
<dbReference type="CDD" id="cd01025">
    <property type="entry name" value="TOPRIM_recR"/>
    <property type="match status" value="1"/>
</dbReference>
<dbReference type="Gene3D" id="3.30.60.80">
    <property type="match status" value="1"/>
</dbReference>
<dbReference type="Gene3D" id="3.40.1360.10">
    <property type="match status" value="1"/>
</dbReference>
<dbReference type="Gene3D" id="6.10.250.240">
    <property type="match status" value="1"/>
</dbReference>
<dbReference type="Gene3D" id="1.10.8.420">
    <property type="entry name" value="RecR Domain 1"/>
    <property type="match status" value="1"/>
</dbReference>
<dbReference type="HAMAP" id="MF_00017">
    <property type="entry name" value="RecR"/>
    <property type="match status" value="1"/>
</dbReference>
<dbReference type="InterPro" id="IPR000093">
    <property type="entry name" value="DNA_Rcmb_RecR"/>
</dbReference>
<dbReference type="InterPro" id="IPR023627">
    <property type="entry name" value="Rcmb_RecR"/>
</dbReference>
<dbReference type="InterPro" id="IPR015967">
    <property type="entry name" value="Rcmb_RecR_Znf"/>
</dbReference>
<dbReference type="InterPro" id="IPR006171">
    <property type="entry name" value="TOPRIM_dom"/>
</dbReference>
<dbReference type="InterPro" id="IPR034137">
    <property type="entry name" value="TOPRIM_RecR"/>
</dbReference>
<dbReference type="NCBIfam" id="TIGR00615">
    <property type="entry name" value="recR"/>
    <property type="match status" value="1"/>
</dbReference>
<dbReference type="PANTHER" id="PTHR30446">
    <property type="entry name" value="RECOMBINATION PROTEIN RECR"/>
    <property type="match status" value="1"/>
</dbReference>
<dbReference type="PANTHER" id="PTHR30446:SF0">
    <property type="entry name" value="RECOMBINATION PROTEIN RECR"/>
    <property type="match status" value="1"/>
</dbReference>
<dbReference type="Pfam" id="PF21175">
    <property type="entry name" value="RecR_C"/>
    <property type="match status" value="1"/>
</dbReference>
<dbReference type="Pfam" id="PF21176">
    <property type="entry name" value="RecR_HhH"/>
    <property type="match status" value="1"/>
</dbReference>
<dbReference type="Pfam" id="PF02132">
    <property type="entry name" value="RecR_ZnF"/>
    <property type="match status" value="1"/>
</dbReference>
<dbReference type="Pfam" id="PF13662">
    <property type="entry name" value="Toprim_4"/>
    <property type="match status" value="1"/>
</dbReference>
<dbReference type="SMART" id="SM00493">
    <property type="entry name" value="TOPRIM"/>
    <property type="match status" value="1"/>
</dbReference>
<dbReference type="SUPFAM" id="SSF111304">
    <property type="entry name" value="Recombination protein RecR"/>
    <property type="match status" value="1"/>
</dbReference>
<dbReference type="PROSITE" id="PS01300">
    <property type="entry name" value="RECR"/>
    <property type="match status" value="1"/>
</dbReference>
<dbReference type="PROSITE" id="PS50880">
    <property type="entry name" value="TOPRIM"/>
    <property type="match status" value="1"/>
</dbReference>
<gene>
    <name evidence="1" type="primary">recR</name>
    <name type="ordered locus">BLA_0202</name>
</gene>
<evidence type="ECO:0000255" key="1">
    <source>
        <dbReference type="HAMAP-Rule" id="MF_00017"/>
    </source>
</evidence>
<comment type="function">
    <text evidence="1">May play a role in DNA repair. It seems to be involved in an RecBC-independent recombinational process of DNA repair. It may act with RecF and RecO.</text>
</comment>
<comment type="similarity">
    <text evidence="1">Belongs to the RecR family.</text>
</comment>
<organism>
    <name type="scientific">Bifidobacterium animalis subsp. lactis (strain AD011)</name>
    <dbReference type="NCBI Taxonomy" id="442563"/>
    <lineage>
        <taxon>Bacteria</taxon>
        <taxon>Bacillati</taxon>
        <taxon>Actinomycetota</taxon>
        <taxon>Actinomycetes</taxon>
        <taxon>Bifidobacteriales</taxon>
        <taxon>Bifidobacteriaceae</taxon>
        <taxon>Bifidobacterium</taxon>
    </lineage>
</organism>
<proteinExistence type="inferred from homology"/>
<feature type="chain" id="PRO_1000195365" description="Recombination protein RecR">
    <location>
        <begin position="1"/>
        <end position="200"/>
    </location>
</feature>
<feature type="domain" description="Toprim" evidence="1">
    <location>
        <begin position="82"/>
        <end position="177"/>
    </location>
</feature>
<feature type="zinc finger region" description="C4-type" evidence="1">
    <location>
        <begin position="59"/>
        <end position="74"/>
    </location>
</feature>
<sequence>MALAYDGAIQRLIDSFASLPGIGPKGAQRIAFYLLQAPDAESQRLVDAINEVKEKVRFCEVCGNVCESSPCTICSDPRRDHGTICVVEEPKDVMSIERTREYRGLYQVLGGAINPMANVGPSDLNIAQLLNRLHDGEVKEIIVALNPNIEGEATTTYLSRLLAPLDIKVTRLASGLPVGGDLEYADEITLSRALEGRREV</sequence>
<accession>B8DVK3</accession>
<protein>
    <recommendedName>
        <fullName evidence="1">Recombination protein RecR</fullName>
    </recommendedName>
</protein>
<name>RECR_BIFA0</name>
<reference key="1">
    <citation type="journal article" date="2009" name="J. Bacteriol.">
        <title>Genome sequence of the probiotic bacterium Bifidobacterium animalis subsp. lactis AD011.</title>
        <authorList>
            <person name="Kim J.F."/>
            <person name="Jeong H."/>
            <person name="Yu D.S."/>
            <person name="Choi S.-H."/>
            <person name="Hur C.-G."/>
            <person name="Park M.-S."/>
            <person name="Yoon S.H."/>
            <person name="Kim D.-W."/>
            <person name="Ji G.E."/>
            <person name="Park H.-S."/>
            <person name="Oh T.K."/>
        </authorList>
    </citation>
    <scope>NUCLEOTIDE SEQUENCE [LARGE SCALE GENOMIC DNA]</scope>
    <source>
        <strain>AD011</strain>
    </source>
</reference>